<sequence>MNAQKGFTLIELMIVIAIIGILAAIALPAYQDYIARAQVSEAFTLADGLKTSISTNRQNGRCFADGKDTAADGVDIITGKYGKATILEENPNTADGLICGIYYEFNTTGVSDKLIGKTIALKADEKAGKLVLETVNSKTTNVENKYLPSAFKKP</sequence>
<reference key="1">
    <citation type="journal article" date="1991" name="J. Gen. Microbiol.">
        <title>The type 4 pilin of Moraxella nonliquefaciens exhibits unique similarities with the pilins of Neisseria gonorrhoeae and Dichelobacter (Bacteroides) nodosus.</title>
        <authorList>
            <person name="Tonjum T."/>
            <person name="Marrs C.F."/>
            <person name="Rozsa F.W."/>
            <person name="Bovre K."/>
        </authorList>
    </citation>
    <scope>NUCLEOTIDE SEQUENCE [GENOMIC DNA]</scope>
    <source>
        <strain>NCTC 7784</strain>
    </source>
</reference>
<reference key="2">
    <citation type="journal article" date="1977" name="FEBS Lett.">
        <title>Purification and N-terminal sequence of a fimbrial protein from Moraxella nonliquefaciens.</title>
        <authorList>
            <person name="Froholm L.O."/>
            <person name="Sletten K."/>
        </authorList>
    </citation>
    <scope>PROTEIN SEQUENCE OF 7-55</scope>
    <scope>METHYLATION AT PHE-7</scope>
</reference>
<dbReference type="EMBL" id="M59707">
    <property type="protein sequence ID" value="AAA25310.1"/>
    <property type="molecule type" value="Genomic_DNA"/>
</dbReference>
<dbReference type="PIR" id="A44809">
    <property type="entry name" value="A44809"/>
</dbReference>
<dbReference type="SMR" id="P09829"/>
<dbReference type="iPTMnet" id="P09829"/>
<dbReference type="GO" id="GO:0016020">
    <property type="term" value="C:membrane"/>
    <property type="evidence" value="ECO:0007669"/>
    <property type="project" value="UniProtKB-SubCell"/>
</dbReference>
<dbReference type="GO" id="GO:0044096">
    <property type="term" value="C:type IV pilus"/>
    <property type="evidence" value="ECO:0007669"/>
    <property type="project" value="TreeGrafter"/>
</dbReference>
<dbReference type="GO" id="GO:0007155">
    <property type="term" value="P:cell adhesion"/>
    <property type="evidence" value="ECO:0007669"/>
    <property type="project" value="InterPro"/>
</dbReference>
<dbReference type="GO" id="GO:0043107">
    <property type="term" value="P:type IV pilus-dependent motility"/>
    <property type="evidence" value="ECO:0007669"/>
    <property type="project" value="TreeGrafter"/>
</dbReference>
<dbReference type="Gene3D" id="3.30.700.10">
    <property type="entry name" value="Glycoprotein, Type 4 Pilin"/>
    <property type="match status" value="1"/>
</dbReference>
<dbReference type="InterPro" id="IPR012902">
    <property type="entry name" value="N_methyl_site"/>
</dbReference>
<dbReference type="InterPro" id="IPR001082">
    <property type="entry name" value="Pilin"/>
</dbReference>
<dbReference type="InterPro" id="IPR045584">
    <property type="entry name" value="Pilin-like"/>
</dbReference>
<dbReference type="InterPro" id="IPR050470">
    <property type="entry name" value="T4P/T2SS_Core"/>
</dbReference>
<dbReference type="NCBIfam" id="TIGR02532">
    <property type="entry name" value="IV_pilin_GFxxxE"/>
    <property type="match status" value="1"/>
</dbReference>
<dbReference type="PANTHER" id="PTHR30093">
    <property type="entry name" value="GENERAL SECRETION PATHWAY PROTEIN G"/>
    <property type="match status" value="1"/>
</dbReference>
<dbReference type="PANTHER" id="PTHR30093:SF34">
    <property type="entry name" value="PREPILIN PEPTIDASE-DEPENDENT PROTEIN D"/>
    <property type="match status" value="1"/>
</dbReference>
<dbReference type="Pfam" id="PF07963">
    <property type="entry name" value="N_methyl"/>
    <property type="match status" value="1"/>
</dbReference>
<dbReference type="Pfam" id="PF00114">
    <property type="entry name" value="Pilin"/>
    <property type="match status" value="1"/>
</dbReference>
<dbReference type="SUPFAM" id="SSF54523">
    <property type="entry name" value="Pili subunits"/>
    <property type="match status" value="1"/>
</dbReference>
<dbReference type="PROSITE" id="PS00409">
    <property type="entry name" value="PROKAR_NTER_METHYL"/>
    <property type="match status" value="1"/>
</dbReference>
<protein>
    <recommendedName>
        <fullName>Fimbrial protein</fullName>
    </recommendedName>
    <alternativeName>
        <fullName>Pilin</fullName>
    </alternativeName>
</protein>
<feature type="propeptide" id="PRO_0000024152" description="Leader sequence" evidence="2 3">
    <location>
        <begin position="1"/>
        <end position="6"/>
    </location>
</feature>
<feature type="chain" id="PRO_0000024153" description="Fimbrial protein">
    <location>
        <begin position="7"/>
        <end position="154"/>
    </location>
</feature>
<feature type="transmembrane region" description="Helical" evidence="1">
    <location>
        <begin position="7"/>
        <end position="29"/>
    </location>
</feature>
<feature type="modified residue" description="N-methylphenylalanine" evidence="2 3">
    <location>
        <position position="7"/>
    </location>
</feature>
<organism>
    <name type="scientific">Moraxella nonliquefaciens</name>
    <dbReference type="NCBI Taxonomy" id="478"/>
    <lineage>
        <taxon>Bacteria</taxon>
        <taxon>Pseudomonadati</taxon>
        <taxon>Pseudomonadota</taxon>
        <taxon>Gammaproteobacteria</taxon>
        <taxon>Moraxellales</taxon>
        <taxon>Moraxellaceae</taxon>
        <taxon>Moraxella</taxon>
    </lineage>
</organism>
<keyword id="KW-0903">Direct protein sequencing</keyword>
<keyword id="KW-0281">Fimbrium</keyword>
<keyword id="KW-0472">Membrane</keyword>
<keyword id="KW-0488">Methylation</keyword>
<keyword id="KW-0812">Transmembrane</keyword>
<keyword id="KW-1133">Transmembrane helix</keyword>
<accession>P09829</accession>
<gene>
    <name type="primary">tfpA</name>
</gene>
<name>FMM_MORNO</name>
<evidence type="ECO:0000255" key="1"/>
<evidence type="ECO:0000255" key="2">
    <source>
        <dbReference type="PROSITE-ProRule" id="PRU01070"/>
    </source>
</evidence>
<evidence type="ECO:0000269" key="3">
    <source>
    </source>
</evidence>
<evidence type="ECO:0000305" key="4"/>
<comment type="subunit">
    <text>The pili are polar flexible filaments of about 5.4 nanometers diameter and 2.5 micrometers average length; they consist of only a single polypeptide chain arranged in a helical configuration of five subunits per turn in the assembled pilus.</text>
</comment>
<comment type="subcellular location">
    <subcellularLocation>
        <location>Fimbrium</location>
    </subcellularLocation>
    <subcellularLocation>
        <location evidence="1">Membrane</location>
        <topology evidence="1">Single-pass membrane protein</topology>
    </subcellularLocation>
</comment>
<comment type="similarity">
    <text evidence="4">Belongs to the N-Me-Phe pilin family.</text>
</comment>
<proteinExistence type="evidence at protein level"/>